<feature type="chain" id="PRO_0000212796" description="Mitochondrial pyruvate carrier 2">
    <location>
        <begin position="1"/>
        <end position="127"/>
    </location>
</feature>
<feature type="topological domain" description="Mitochondrial matrix" evidence="1">
    <location>
        <begin position="2"/>
        <end position="40"/>
    </location>
</feature>
<feature type="transmembrane region" description="Helical" evidence="3">
    <location>
        <begin position="41"/>
        <end position="61"/>
    </location>
</feature>
<feature type="topological domain" description="Mitochondrial intermembrane" evidence="1">
    <location>
        <begin position="62"/>
        <end position="72"/>
    </location>
</feature>
<feature type="transmembrane region" description="Helical" evidence="3">
    <location>
        <begin position="73"/>
        <end position="90"/>
    </location>
</feature>
<feature type="topological domain" description="Mitochondrial matrix" evidence="1">
    <location>
        <begin position="91"/>
        <end position="95"/>
    </location>
</feature>
<feature type="transmembrane region" description="Helical" evidence="3">
    <location>
        <begin position="96"/>
        <end position="115"/>
    </location>
</feature>
<feature type="topological domain" description="Mitochondrial intermembrane" evidence="1">
    <location>
        <begin position="116"/>
        <end position="127"/>
    </location>
</feature>
<feature type="modified residue" description="N6-acetyllysine" evidence="2">
    <location>
        <position position="26"/>
    </location>
</feature>
<feature type="splice variant" id="VSP_006719" description="In isoform Short." evidence="5">
    <location>
        <begin position="117"/>
        <end position="127"/>
    </location>
</feature>
<keyword id="KW-0007">Acetylation</keyword>
<keyword id="KW-0025">Alternative splicing</keyword>
<keyword id="KW-0472">Membrane</keyword>
<keyword id="KW-0496">Mitochondrion</keyword>
<keyword id="KW-0999">Mitochondrion inner membrane</keyword>
<keyword id="KW-1185">Reference proteome</keyword>
<keyword id="KW-0812">Transmembrane</keyword>
<keyword id="KW-1133">Transmembrane helix</keyword>
<keyword id="KW-0813">Transport</keyword>
<evidence type="ECO:0000250" key="1">
    <source>
        <dbReference type="UniProtKB" id="O95563"/>
    </source>
</evidence>
<evidence type="ECO:0000250" key="2">
    <source>
        <dbReference type="UniProtKB" id="Q9D023"/>
    </source>
</evidence>
<evidence type="ECO:0000255" key="3"/>
<evidence type="ECO:0000269" key="4">
    <source>
    </source>
</evidence>
<evidence type="ECO:0000305" key="5"/>
<proteinExistence type="evidence at transcript level"/>
<accession>P38718</accession>
<sequence length="127" mass="14258">MAAAGARGLRATYHRLMDKVELLLPKKLRPLYNHPAGPRTVFFWAPIMKWGLVCAGLADMARPAEKLSTAQSTVLMATGFIWSRYSLVIIPKNWSLFAVNFFVGSAGASQLFRIWKYNQELKSKGIQ</sequence>
<dbReference type="EMBL" id="M13095">
    <property type="protein sequence ID" value="AAA40791.1"/>
    <property type="molecule type" value="Genomic_DNA"/>
</dbReference>
<dbReference type="EMBL" id="M13094">
    <property type="protein sequence ID" value="AAA40791.1"/>
    <property type="status" value="JOINED"/>
    <property type="molecule type" value="Genomic_DNA"/>
</dbReference>
<dbReference type="RefSeq" id="NP_001071111.1">
    <molecule id="P38718-1"/>
    <property type="nucleotide sequence ID" value="NM_001077643.2"/>
</dbReference>
<dbReference type="RefSeq" id="XP_006250188.1">
    <molecule id="P38718-2"/>
    <property type="nucleotide sequence ID" value="XM_006250126.4"/>
</dbReference>
<dbReference type="SMR" id="P38718"/>
<dbReference type="BioGRID" id="1199117">
    <property type="interactions" value="1"/>
</dbReference>
<dbReference type="FunCoup" id="P38718">
    <property type="interactions" value="1036"/>
</dbReference>
<dbReference type="STRING" id="10116.ENSRNOP00000004206"/>
<dbReference type="GuidetoPHARMACOLOGY" id="3023"/>
<dbReference type="iPTMnet" id="P38718"/>
<dbReference type="PhosphoSitePlus" id="P38718"/>
<dbReference type="jPOST" id="P38718"/>
<dbReference type="PaxDb" id="10116-ENSRNOP00000004206"/>
<dbReference type="Ensembl" id="ENSRNOT00000004206.8">
    <molecule id="P38718-1"/>
    <property type="protein sequence ID" value="ENSRNOP00000004206.6"/>
    <property type="gene ID" value="ENSRNOG00000003150.8"/>
</dbReference>
<dbReference type="GeneID" id="100359982"/>
<dbReference type="KEGG" id="rno:100359982"/>
<dbReference type="AGR" id="RGD:1563422"/>
<dbReference type="CTD" id="25874"/>
<dbReference type="RGD" id="1563422">
    <property type="gene designation" value="Mpc2"/>
</dbReference>
<dbReference type="eggNOG" id="KOG1589">
    <property type="taxonomic scope" value="Eukaryota"/>
</dbReference>
<dbReference type="GeneTree" id="ENSGT00510000047120"/>
<dbReference type="HOGENOM" id="CLU_099502_4_1_1"/>
<dbReference type="InParanoid" id="P38718"/>
<dbReference type="OMA" id="PQQFAIC"/>
<dbReference type="OrthoDB" id="869189at2759"/>
<dbReference type="PhylomeDB" id="P38718"/>
<dbReference type="PRO" id="PR:P38718"/>
<dbReference type="Proteomes" id="UP000002494">
    <property type="component" value="Chromosome 13"/>
</dbReference>
<dbReference type="Bgee" id="ENSRNOG00000003150">
    <property type="expression patterns" value="Expressed in kidney and 20 other cell types or tissues"/>
</dbReference>
<dbReference type="GO" id="GO:0005743">
    <property type="term" value="C:mitochondrial inner membrane"/>
    <property type="evidence" value="ECO:0000250"/>
    <property type="project" value="UniProtKB"/>
</dbReference>
<dbReference type="GO" id="GO:0005739">
    <property type="term" value="C:mitochondrion"/>
    <property type="evidence" value="ECO:0000266"/>
    <property type="project" value="RGD"/>
</dbReference>
<dbReference type="GO" id="GO:0042802">
    <property type="term" value="F:identical protein binding"/>
    <property type="evidence" value="ECO:0000266"/>
    <property type="project" value="RGD"/>
</dbReference>
<dbReference type="GO" id="GO:0050833">
    <property type="term" value="F:pyruvate transmembrane transporter activity"/>
    <property type="evidence" value="ECO:0000266"/>
    <property type="project" value="RGD"/>
</dbReference>
<dbReference type="GO" id="GO:0006850">
    <property type="term" value="P:mitochondrial pyruvate transmembrane transport"/>
    <property type="evidence" value="ECO:0000250"/>
    <property type="project" value="UniProtKB"/>
</dbReference>
<dbReference type="GO" id="GO:0035774">
    <property type="term" value="P:positive regulation of insulin secretion involved in cellular response to glucose stimulus"/>
    <property type="evidence" value="ECO:0000266"/>
    <property type="project" value="RGD"/>
</dbReference>
<dbReference type="GO" id="GO:0006086">
    <property type="term" value="P:pyruvate decarboxylation to acetyl-CoA"/>
    <property type="evidence" value="ECO:0000266"/>
    <property type="project" value="RGD"/>
</dbReference>
<dbReference type="InterPro" id="IPR005336">
    <property type="entry name" value="MPC"/>
</dbReference>
<dbReference type="PANTHER" id="PTHR14154">
    <property type="entry name" value="UPF0041 BRAIN PROTEIN 44-RELATED"/>
    <property type="match status" value="1"/>
</dbReference>
<dbReference type="Pfam" id="PF03650">
    <property type="entry name" value="MPC"/>
    <property type="match status" value="1"/>
</dbReference>
<comment type="function">
    <text evidence="1">Mediates the uptake of pyruvate into mitochondria.</text>
</comment>
<comment type="catalytic activity">
    <reaction evidence="1">
        <text>pyruvate(out) + H(+)(out) = pyruvate(in) + H(+)(in)</text>
        <dbReference type="Rhea" id="RHEA:64720"/>
        <dbReference type="ChEBI" id="CHEBI:15361"/>
        <dbReference type="ChEBI" id="CHEBI:15378"/>
    </reaction>
</comment>
<comment type="subunit">
    <text evidence="1">Homodimer. Homooligomer. Forms heterodimers with MPC1 and MPC1L. The heterodimer is the more stable and dominant form.</text>
</comment>
<comment type="subcellular location">
    <subcellularLocation>
        <location evidence="1">Mitochondrion inner membrane</location>
        <topology evidence="3">Multi-pass membrane protein</topology>
    </subcellularLocation>
</comment>
<comment type="alternative products">
    <event type="alternative splicing"/>
    <isoform>
        <id>P38718-1</id>
        <name>Long</name>
        <sequence type="displayed"/>
    </isoform>
    <isoform>
        <id>P38718-2</id>
        <name>Short</name>
        <sequence type="described" ref="VSP_006719"/>
    </isoform>
</comment>
<comment type="tissue specificity">
    <text evidence="4">Liver, kidney, and brain.</text>
</comment>
<comment type="similarity">
    <text evidence="5">Belongs to the mitochondrial pyruvate carrier (MPC) (TC 2.A.105) family.</text>
</comment>
<reference key="1">
    <citation type="journal article" date="1986" name="Mol. Cell. Biol.">
        <title>Structural characterization of a heterogeneous family of rat brain mRNAs.</title>
        <authorList>
            <person name="Tsou A.-P."/>
            <person name="Lai C."/>
            <person name="Danielson P."/>
            <person name="Noonan D.J."/>
            <person name="Sutcliffe J.G."/>
        </authorList>
    </citation>
    <scope>NUCLEOTIDE SEQUENCE [GENOMIC DNA] (ISOFORMS LONG AND SHORT)</scope>
    <scope>TISSUE SPECIFICITY</scope>
    <source>
        <strain>Sprague-Dawley</strain>
        <tissue>Brain</tissue>
    </source>
</reference>
<organism>
    <name type="scientific">Rattus norvegicus</name>
    <name type="common">Rat</name>
    <dbReference type="NCBI Taxonomy" id="10116"/>
    <lineage>
        <taxon>Eukaryota</taxon>
        <taxon>Metazoa</taxon>
        <taxon>Chordata</taxon>
        <taxon>Craniata</taxon>
        <taxon>Vertebrata</taxon>
        <taxon>Euteleostomi</taxon>
        <taxon>Mammalia</taxon>
        <taxon>Eutheria</taxon>
        <taxon>Euarchontoglires</taxon>
        <taxon>Glires</taxon>
        <taxon>Rodentia</taxon>
        <taxon>Myomorpha</taxon>
        <taxon>Muroidea</taxon>
        <taxon>Muridae</taxon>
        <taxon>Murinae</taxon>
        <taxon>Rattus</taxon>
    </lineage>
</organism>
<protein>
    <recommendedName>
        <fullName>Mitochondrial pyruvate carrier 2</fullName>
    </recommendedName>
    <alternativeName>
        <fullName>Brain protein 44</fullName>
    </alternativeName>
    <alternativeName>
        <fullName>Protein 0-44</fullName>
    </alternativeName>
</protein>
<gene>
    <name type="primary">Mpc2</name>
    <name type="synonym">Brp44</name>
</gene>
<name>MPC2_RAT</name>